<proteinExistence type="inferred from homology"/>
<sequence>MFVDNIKLKVKSGKGGQGCVSFRREKFVVKGGPDGGDGGKGGDVIVECDKNTHTLSHYKGRKLLKAKNGRPGEGRKKHGANGEDLILKVPPGTVIKNAETGEVLLDMKEDGERKVLLEGGRGGLGNWHFRGPRNQTPRYAQPGEEGQELEIVLELKLIADVGLVGFPNAGKSTLISTLSNARPEIANYEFTTLTPKLGVVRVDEYRSFVMADIPGIIEGAHEGKGLGIEFLKHIERTSTILYMIDLSSYRDPVYQFKTLQKELKEYSEKLASRDYAIALTKCDSVEVEKIEEFFEKLGISKTEPKFKADPNLPCHFDDKTFVLPISSVANINIEALKFALFDLVEKNKRKENEENSF</sequence>
<protein>
    <recommendedName>
        <fullName evidence="1">GTPase Obg</fullName>
        <ecNumber evidence="1">3.6.5.-</ecNumber>
    </recommendedName>
    <alternativeName>
        <fullName evidence="1">GTP-binding protein Obg</fullName>
    </alternativeName>
</protein>
<comment type="function">
    <text evidence="1">An essential GTPase which binds GTP, GDP and possibly (p)ppGpp with moderate affinity, with high nucleotide exchange rates and a fairly low GTP hydrolysis rate. Plays a role in control of the cell cycle, stress response, ribosome biogenesis and in those bacteria that undergo differentiation, in morphogenesis control.</text>
</comment>
<comment type="cofactor">
    <cofactor evidence="1">
        <name>Mg(2+)</name>
        <dbReference type="ChEBI" id="CHEBI:18420"/>
    </cofactor>
</comment>
<comment type="subunit">
    <text evidence="1">Monomer.</text>
</comment>
<comment type="subcellular location">
    <subcellularLocation>
        <location evidence="1">Cytoplasm</location>
    </subcellularLocation>
</comment>
<comment type="similarity">
    <text evidence="1">Belongs to the TRAFAC class OBG-HflX-like GTPase superfamily. OBG GTPase family.</text>
</comment>
<keyword id="KW-0963">Cytoplasm</keyword>
<keyword id="KW-0342">GTP-binding</keyword>
<keyword id="KW-0378">Hydrolase</keyword>
<keyword id="KW-0460">Magnesium</keyword>
<keyword id="KW-0479">Metal-binding</keyword>
<keyword id="KW-0547">Nucleotide-binding</keyword>
<reference key="1">
    <citation type="journal article" date="2009" name="PLoS Genet.">
        <title>Adaptations to submarine hydrothermal environments exemplified by the genome of Nautilia profundicola.</title>
        <authorList>
            <person name="Campbell B.J."/>
            <person name="Smith J.L."/>
            <person name="Hanson T.E."/>
            <person name="Klotz M.G."/>
            <person name="Stein L.Y."/>
            <person name="Lee C.K."/>
            <person name="Wu D."/>
            <person name="Robinson J.M."/>
            <person name="Khouri H.M."/>
            <person name="Eisen J.A."/>
            <person name="Cary S.C."/>
        </authorList>
    </citation>
    <scope>NUCLEOTIDE SEQUENCE [LARGE SCALE GENOMIC DNA]</scope>
    <source>
        <strain>ATCC BAA-1463 / DSM 18972 / AmH</strain>
    </source>
</reference>
<organism>
    <name type="scientific">Nautilia profundicola (strain ATCC BAA-1463 / DSM 18972 / AmH)</name>
    <dbReference type="NCBI Taxonomy" id="598659"/>
    <lineage>
        <taxon>Bacteria</taxon>
        <taxon>Pseudomonadati</taxon>
        <taxon>Campylobacterota</taxon>
        <taxon>Epsilonproteobacteria</taxon>
        <taxon>Nautiliales</taxon>
        <taxon>Nautiliaceae</taxon>
        <taxon>Nautilia</taxon>
    </lineage>
</organism>
<evidence type="ECO:0000255" key="1">
    <source>
        <dbReference type="HAMAP-Rule" id="MF_01454"/>
    </source>
</evidence>
<evidence type="ECO:0000255" key="2">
    <source>
        <dbReference type="PROSITE-ProRule" id="PRU01231"/>
    </source>
</evidence>
<gene>
    <name evidence="1" type="primary">obg</name>
    <name type="ordered locus">NAMH_1401</name>
</gene>
<dbReference type="EC" id="3.6.5.-" evidence="1"/>
<dbReference type="EMBL" id="CP001279">
    <property type="protein sequence ID" value="ACM92076.1"/>
    <property type="molecule type" value="Genomic_DNA"/>
</dbReference>
<dbReference type="RefSeq" id="WP_012663448.1">
    <property type="nucleotide sequence ID" value="NC_012115.1"/>
</dbReference>
<dbReference type="SMR" id="B9L605"/>
<dbReference type="STRING" id="598659.NAMH_1401"/>
<dbReference type="KEGG" id="nam:NAMH_1401"/>
<dbReference type="eggNOG" id="COG0536">
    <property type="taxonomic scope" value="Bacteria"/>
</dbReference>
<dbReference type="HOGENOM" id="CLU_011747_2_0_7"/>
<dbReference type="OrthoDB" id="9807318at2"/>
<dbReference type="Proteomes" id="UP000000448">
    <property type="component" value="Chromosome"/>
</dbReference>
<dbReference type="GO" id="GO:0005737">
    <property type="term" value="C:cytoplasm"/>
    <property type="evidence" value="ECO:0007669"/>
    <property type="project" value="UniProtKB-SubCell"/>
</dbReference>
<dbReference type="GO" id="GO:0005525">
    <property type="term" value="F:GTP binding"/>
    <property type="evidence" value="ECO:0007669"/>
    <property type="project" value="UniProtKB-UniRule"/>
</dbReference>
<dbReference type="GO" id="GO:0003924">
    <property type="term" value="F:GTPase activity"/>
    <property type="evidence" value="ECO:0007669"/>
    <property type="project" value="UniProtKB-UniRule"/>
</dbReference>
<dbReference type="GO" id="GO:0000287">
    <property type="term" value="F:magnesium ion binding"/>
    <property type="evidence" value="ECO:0007669"/>
    <property type="project" value="InterPro"/>
</dbReference>
<dbReference type="GO" id="GO:0042254">
    <property type="term" value="P:ribosome biogenesis"/>
    <property type="evidence" value="ECO:0007669"/>
    <property type="project" value="UniProtKB-UniRule"/>
</dbReference>
<dbReference type="CDD" id="cd01898">
    <property type="entry name" value="Obg"/>
    <property type="match status" value="1"/>
</dbReference>
<dbReference type="FunFam" id="2.70.210.12:FF:000001">
    <property type="entry name" value="GTPase Obg"/>
    <property type="match status" value="1"/>
</dbReference>
<dbReference type="Gene3D" id="2.70.210.12">
    <property type="entry name" value="GTP1/OBG domain"/>
    <property type="match status" value="1"/>
</dbReference>
<dbReference type="Gene3D" id="3.40.50.300">
    <property type="entry name" value="P-loop containing nucleotide triphosphate hydrolases"/>
    <property type="match status" value="1"/>
</dbReference>
<dbReference type="HAMAP" id="MF_01454">
    <property type="entry name" value="GTPase_Obg"/>
    <property type="match status" value="1"/>
</dbReference>
<dbReference type="InterPro" id="IPR031167">
    <property type="entry name" value="G_OBG"/>
</dbReference>
<dbReference type="InterPro" id="IPR006073">
    <property type="entry name" value="GTP-bd"/>
</dbReference>
<dbReference type="InterPro" id="IPR014100">
    <property type="entry name" value="GTP-bd_Obg/CgtA"/>
</dbReference>
<dbReference type="InterPro" id="IPR006074">
    <property type="entry name" value="GTP1-OBG_CS"/>
</dbReference>
<dbReference type="InterPro" id="IPR006169">
    <property type="entry name" value="GTP1_OBG_dom"/>
</dbReference>
<dbReference type="InterPro" id="IPR036726">
    <property type="entry name" value="GTP1_OBG_dom_sf"/>
</dbReference>
<dbReference type="InterPro" id="IPR045086">
    <property type="entry name" value="OBG_GTPase"/>
</dbReference>
<dbReference type="InterPro" id="IPR027417">
    <property type="entry name" value="P-loop_NTPase"/>
</dbReference>
<dbReference type="NCBIfam" id="TIGR02729">
    <property type="entry name" value="Obg_CgtA"/>
    <property type="match status" value="1"/>
</dbReference>
<dbReference type="NCBIfam" id="NF008955">
    <property type="entry name" value="PRK12297.1"/>
    <property type="match status" value="1"/>
</dbReference>
<dbReference type="NCBIfam" id="NF008956">
    <property type="entry name" value="PRK12299.1"/>
    <property type="match status" value="1"/>
</dbReference>
<dbReference type="PANTHER" id="PTHR11702">
    <property type="entry name" value="DEVELOPMENTALLY REGULATED GTP-BINDING PROTEIN-RELATED"/>
    <property type="match status" value="1"/>
</dbReference>
<dbReference type="PANTHER" id="PTHR11702:SF31">
    <property type="entry name" value="MITOCHONDRIAL RIBOSOME-ASSOCIATED GTPASE 2"/>
    <property type="match status" value="1"/>
</dbReference>
<dbReference type="Pfam" id="PF01018">
    <property type="entry name" value="GTP1_OBG"/>
    <property type="match status" value="1"/>
</dbReference>
<dbReference type="Pfam" id="PF01926">
    <property type="entry name" value="MMR_HSR1"/>
    <property type="match status" value="1"/>
</dbReference>
<dbReference type="PIRSF" id="PIRSF002401">
    <property type="entry name" value="GTP_bd_Obg/CgtA"/>
    <property type="match status" value="1"/>
</dbReference>
<dbReference type="PRINTS" id="PR00326">
    <property type="entry name" value="GTP1OBG"/>
</dbReference>
<dbReference type="SUPFAM" id="SSF82051">
    <property type="entry name" value="Obg GTP-binding protein N-terminal domain"/>
    <property type="match status" value="1"/>
</dbReference>
<dbReference type="SUPFAM" id="SSF52540">
    <property type="entry name" value="P-loop containing nucleoside triphosphate hydrolases"/>
    <property type="match status" value="1"/>
</dbReference>
<dbReference type="PROSITE" id="PS51710">
    <property type="entry name" value="G_OBG"/>
    <property type="match status" value="1"/>
</dbReference>
<dbReference type="PROSITE" id="PS00905">
    <property type="entry name" value="GTP1_OBG"/>
    <property type="match status" value="1"/>
</dbReference>
<dbReference type="PROSITE" id="PS51883">
    <property type="entry name" value="OBG"/>
    <property type="match status" value="1"/>
</dbReference>
<accession>B9L605</accession>
<name>OBG_NAUPA</name>
<feature type="chain" id="PRO_0000386080" description="GTPase Obg">
    <location>
        <begin position="1"/>
        <end position="357"/>
    </location>
</feature>
<feature type="domain" description="Obg" evidence="2">
    <location>
        <begin position="1"/>
        <end position="158"/>
    </location>
</feature>
<feature type="domain" description="OBG-type G" evidence="1">
    <location>
        <begin position="159"/>
        <end position="345"/>
    </location>
</feature>
<feature type="binding site" evidence="1">
    <location>
        <begin position="165"/>
        <end position="172"/>
    </location>
    <ligand>
        <name>GTP</name>
        <dbReference type="ChEBI" id="CHEBI:37565"/>
    </ligand>
</feature>
<feature type="binding site" evidence="1">
    <location>
        <position position="172"/>
    </location>
    <ligand>
        <name>Mg(2+)</name>
        <dbReference type="ChEBI" id="CHEBI:18420"/>
    </ligand>
</feature>
<feature type="binding site" evidence="1">
    <location>
        <begin position="190"/>
        <end position="194"/>
    </location>
    <ligand>
        <name>GTP</name>
        <dbReference type="ChEBI" id="CHEBI:37565"/>
    </ligand>
</feature>
<feature type="binding site" evidence="1">
    <location>
        <position position="192"/>
    </location>
    <ligand>
        <name>Mg(2+)</name>
        <dbReference type="ChEBI" id="CHEBI:18420"/>
    </ligand>
</feature>
<feature type="binding site" evidence="1">
    <location>
        <begin position="212"/>
        <end position="215"/>
    </location>
    <ligand>
        <name>GTP</name>
        <dbReference type="ChEBI" id="CHEBI:37565"/>
    </ligand>
</feature>
<feature type="binding site" evidence="1">
    <location>
        <begin position="280"/>
        <end position="283"/>
    </location>
    <ligand>
        <name>GTP</name>
        <dbReference type="ChEBI" id="CHEBI:37565"/>
    </ligand>
</feature>
<feature type="binding site" evidence="1">
    <location>
        <begin position="326"/>
        <end position="328"/>
    </location>
    <ligand>
        <name>GTP</name>
        <dbReference type="ChEBI" id="CHEBI:37565"/>
    </ligand>
</feature>